<protein>
    <recommendedName>
        <fullName evidence="1">Eukaryotic translation initiation factor 3 subunit C</fullName>
        <shortName evidence="1">eIF3c</shortName>
    </recommendedName>
    <alternativeName>
        <fullName evidence="1">Eukaryotic translation initiation factor 3 subunit 8</fullName>
    </alternativeName>
</protein>
<evidence type="ECO:0000255" key="1">
    <source>
        <dbReference type="HAMAP-Rule" id="MF_03002"/>
    </source>
</evidence>
<evidence type="ECO:0000255" key="2">
    <source>
        <dbReference type="PROSITE-ProRule" id="PRU01185"/>
    </source>
</evidence>
<evidence type="ECO:0000256" key="3">
    <source>
        <dbReference type="SAM" id="MobiDB-lite"/>
    </source>
</evidence>
<keyword id="KW-0963">Cytoplasm</keyword>
<keyword id="KW-0396">Initiation factor</keyword>
<keyword id="KW-0648">Protein biosynthesis</keyword>
<keyword id="KW-1185">Reference proteome</keyword>
<feature type="chain" id="PRO_0000365382" description="Eukaryotic translation initiation factor 3 subunit C">
    <location>
        <begin position="1"/>
        <end position="955"/>
    </location>
</feature>
<feature type="domain" description="PCI" evidence="2">
    <location>
        <begin position="658"/>
        <end position="834"/>
    </location>
</feature>
<feature type="region of interest" description="Disordered" evidence="3">
    <location>
        <begin position="1"/>
        <end position="22"/>
    </location>
</feature>
<feature type="region of interest" description="Disordered" evidence="3">
    <location>
        <begin position="157"/>
        <end position="299"/>
    </location>
</feature>
<feature type="region of interest" description="Disordered" evidence="3">
    <location>
        <begin position="865"/>
        <end position="955"/>
    </location>
</feature>
<feature type="compositionally biased region" description="Acidic residues" evidence="3">
    <location>
        <begin position="162"/>
        <end position="183"/>
    </location>
</feature>
<feature type="compositionally biased region" description="Low complexity" evidence="3">
    <location>
        <begin position="206"/>
        <end position="218"/>
    </location>
</feature>
<feature type="compositionally biased region" description="Acidic residues" evidence="3">
    <location>
        <begin position="219"/>
        <end position="229"/>
    </location>
</feature>
<feature type="compositionally biased region" description="Basic and acidic residues" evidence="3">
    <location>
        <begin position="230"/>
        <end position="250"/>
    </location>
</feature>
<feature type="compositionally biased region" description="Acidic residues" evidence="3">
    <location>
        <begin position="288"/>
        <end position="297"/>
    </location>
</feature>
<feature type="compositionally biased region" description="Low complexity" evidence="3">
    <location>
        <begin position="882"/>
        <end position="894"/>
    </location>
</feature>
<feature type="compositionally biased region" description="Basic and acidic residues" evidence="3">
    <location>
        <begin position="911"/>
        <end position="955"/>
    </location>
</feature>
<dbReference type="EMBL" id="AAAB01008968">
    <property type="protein sequence ID" value="EAA13192.4"/>
    <property type="molecule type" value="Genomic_DNA"/>
</dbReference>
<dbReference type="SMR" id="Q7PMU8"/>
<dbReference type="FunCoup" id="Q7PMU8">
    <property type="interactions" value="2083"/>
</dbReference>
<dbReference type="STRING" id="7165.Q7PMU8"/>
<dbReference type="PaxDb" id="7165-AGAP004725-PA"/>
<dbReference type="EnsemblMetazoa" id="AGAP004725-RA">
    <property type="protein sequence ID" value="AGAP004725-PA"/>
    <property type="gene ID" value="AGAP004725"/>
</dbReference>
<dbReference type="GeneID" id="1278503"/>
<dbReference type="KEGG" id="aga:1278503"/>
<dbReference type="CTD" id="8663"/>
<dbReference type="VEuPathDB" id="VectorBase:AGAMI1_005214"/>
<dbReference type="VEuPathDB" id="VectorBase:AGAP004725"/>
<dbReference type="eggNOG" id="KOG1076">
    <property type="taxonomic scope" value="Eukaryota"/>
</dbReference>
<dbReference type="HOGENOM" id="CLU_004304_0_0_1"/>
<dbReference type="InParanoid" id="Q7PMU8"/>
<dbReference type="OMA" id="FRCGLIK"/>
<dbReference type="PhylomeDB" id="Q7PMU8"/>
<dbReference type="Proteomes" id="UP000007062">
    <property type="component" value="Chromosome 2L"/>
</dbReference>
<dbReference type="GO" id="GO:0016282">
    <property type="term" value="C:eukaryotic 43S preinitiation complex"/>
    <property type="evidence" value="ECO:0007669"/>
    <property type="project" value="UniProtKB-UniRule"/>
</dbReference>
<dbReference type="GO" id="GO:0033290">
    <property type="term" value="C:eukaryotic 48S preinitiation complex"/>
    <property type="evidence" value="ECO:0007669"/>
    <property type="project" value="UniProtKB-UniRule"/>
</dbReference>
<dbReference type="GO" id="GO:0005852">
    <property type="term" value="C:eukaryotic translation initiation factor 3 complex"/>
    <property type="evidence" value="ECO:0000318"/>
    <property type="project" value="GO_Central"/>
</dbReference>
<dbReference type="GO" id="GO:0003723">
    <property type="term" value="F:RNA binding"/>
    <property type="evidence" value="ECO:0007669"/>
    <property type="project" value="InterPro"/>
</dbReference>
<dbReference type="GO" id="GO:0003743">
    <property type="term" value="F:translation initiation factor activity"/>
    <property type="evidence" value="ECO:0007669"/>
    <property type="project" value="UniProtKB-UniRule"/>
</dbReference>
<dbReference type="GO" id="GO:0031369">
    <property type="term" value="F:translation initiation factor binding"/>
    <property type="evidence" value="ECO:0000318"/>
    <property type="project" value="GO_Central"/>
</dbReference>
<dbReference type="GO" id="GO:0001732">
    <property type="term" value="P:formation of cytoplasmic translation initiation complex"/>
    <property type="evidence" value="ECO:0007669"/>
    <property type="project" value="UniProtKB-UniRule"/>
</dbReference>
<dbReference type="GO" id="GO:0006413">
    <property type="term" value="P:translational initiation"/>
    <property type="evidence" value="ECO:0000318"/>
    <property type="project" value="GO_Central"/>
</dbReference>
<dbReference type="Gene3D" id="1.25.40.570">
    <property type="match status" value="1"/>
</dbReference>
<dbReference type="HAMAP" id="MF_03002">
    <property type="entry name" value="eIF3c"/>
    <property type="match status" value="1"/>
</dbReference>
<dbReference type="InterPro" id="IPR027516">
    <property type="entry name" value="EIF3C"/>
</dbReference>
<dbReference type="InterPro" id="IPR008905">
    <property type="entry name" value="EIF3C_N_dom"/>
</dbReference>
<dbReference type="InterPro" id="IPR000717">
    <property type="entry name" value="PCI_dom"/>
</dbReference>
<dbReference type="InterPro" id="IPR036390">
    <property type="entry name" value="WH_DNA-bd_sf"/>
</dbReference>
<dbReference type="PANTHER" id="PTHR13937">
    <property type="entry name" value="EUKARYOTIC TRANSLATION INITATION FACTOR 3, SUBUNIT 8 EIF3S8 -RELATED"/>
    <property type="match status" value="1"/>
</dbReference>
<dbReference type="PANTHER" id="PTHR13937:SF0">
    <property type="entry name" value="EUKARYOTIC TRANSLATION INITIATION FACTOR 3 SUBUNIT C-RELATED"/>
    <property type="match status" value="1"/>
</dbReference>
<dbReference type="Pfam" id="PF05470">
    <property type="entry name" value="eIF-3c_N"/>
    <property type="match status" value="1"/>
</dbReference>
<dbReference type="Pfam" id="PF01399">
    <property type="entry name" value="PCI"/>
    <property type="match status" value="1"/>
</dbReference>
<dbReference type="SMART" id="SM00088">
    <property type="entry name" value="PINT"/>
    <property type="match status" value="1"/>
</dbReference>
<dbReference type="SUPFAM" id="SSF46785">
    <property type="entry name" value="Winged helix' DNA-binding domain"/>
    <property type="match status" value="1"/>
</dbReference>
<dbReference type="PROSITE" id="PS50250">
    <property type="entry name" value="PCI"/>
    <property type="match status" value="1"/>
</dbReference>
<name>EIF3C_ANOGA</name>
<accession>Q7PMU8</accession>
<proteinExistence type="inferred from homology"/>
<sequence>MSRFFAGGSDSDSDSSSDSEPVIRQQVAQFTFSDEEEDVKRVVRSKKEKRYEDLSNIIKSIRNHKKIKDMSSVLTSFEEFMRAYTKALPVVMKEENGVTPRIVVRALAELEDFVNESWDDKESRKNLSKNNNKALGTLRQKFRKYIKDFESDMKRFRAAPEDFAEEEEDDEREDEKGSDEEEEKVVVQVEPKAVSFKKEPEKAKPVKPVADSDSSDWGSDSDSDSTSSDEDAKYTSIRDRFLKKPEKGTEEIASAPSGVSGDDAFKKEKKKKTGEALSKKKKPKQDEMFDENEEEEEGWKVVNGTRSGASEQPKMFAKDAEIDTKLVVNKLNEVMAARGKKRTDRKMQIEFLRELRTVAETNNLGPAVAVKIRFNIVSAIFDYNPKVSGAMKLEHWSKLLEEIQELLKLLLAHEDVHLSESILDEYEEYDTAPFKIRGCMLTAVERLDDEFTKLLKECDPHSNEYVDRLKDEVPVTNIIEQVVTYVERLGNEMEICRIYLRKIDHLYYKFDPDVLKKRKGQLPANTITSVEEMDKLCRYIYAKDQTDRLRTRAILSHIFHHALHDNWFQARDLVLMSHLQETIHHSDPATQILYNRMMANLGLCAFRHGNIKDAHLCLVDLMMTGKPKELLAQGLVPQRQHERSLEQEKIEKQRQMPFHMHINLELLECVYLVSAMLLEIPYMAAHEFDARRRMISKTFYQQLRSSERQSLVGPPESMREHVVAAAKAMRHGDWNACANFIVNKKMNVKVWDLFYEANRVREMMIKFIKEESLRTYLFTYSNVFASISVPHLADMFKLPKSKVHSLISKMIINEELMASLDDPTETIVMHRSEPSRLQALSMQLADKVTNLVDANERIFEMKQGNFFQRGGNQGYNRDRQNYRNQNQNQNWNNNRRQDNRNRGNRGNQNRGEGREQREHHRDHHRDQREHREHQNREFREQREQMRNVEYQNKAE</sequence>
<gene>
    <name evidence="1" type="primary">eIF3-S8</name>
    <name type="ORF">AGAP004725</name>
</gene>
<comment type="function">
    <text evidence="1">Component of the eukaryotic translation initiation factor 3 (eIF-3) complex, which is involved in protein synthesis of a specialized repertoire of mRNAs and, together with other initiation factors, stimulates binding of mRNA and methionyl-tRNAi to the 40S ribosome. The eIF-3 complex specifically targets and initiates translation of a subset of mRNAs involved in cell proliferation.</text>
</comment>
<comment type="subunit">
    <text evidence="1">Component of the eukaryotic translation initiation factor 3 (eIF-3) complex.</text>
</comment>
<comment type="subcellular location">
    <subcellularLocation>
        <location evidence="1">Cytoplasm</location>
    </subcellularLocation>
</comment>
<comment type="similarity">
    <text evidence="1">Belongs to the eIF-3 subunit C family.</text>
</comment>
<organism>
    <name type="scientific">Anopheles gambiae</name>
    <name type="common">African malaria mosquito</name>
    <dbReference type="NCBI Taxonomy" id="7165"/>
    <lineage>
        <taxon>Eukaryota</taxon>
        <taxon>Metazoa</taxon>
        <taxon>Ecdysozoa</taxon>
        <taxon>Arthropoda</taxon>
        <taxon>Hexapoda</taxon>
        <taxon>Insecta</taxon>
        <taxon>Pterygota</taxon>
        <taxon>Neoptera</taxon>
        <taxon>Endopterygota</taxon>
        <taxon>Diptera</taxon>
        <taxon>Nematocera</taxon>
        <taxon>Culicoidea</taxon>
        <taxon>Culicidae</taxon>
        <taxon>Anophelinae</taxon>
        <taxon>Anopheles</taxon>
    </lineage>
</organism>
<reference key="1">
    <citation type="journal article" date="2002" name="Science">
        <title>The genome sequence of the malaria mosquito Anopheles gambiae.</title>
        <authorList>
            <person name="Holt R.A."/>
            <person name="Subramanian G.M."/>
            <person name="Halpern A."/>
            <person name="Sutton G.G."/>
            <person name="Charlab R."/>
            <person name="Nusskern D.R."/>
            <person name="Wincker P."/>
            <person name="Clark A.G."/>
            <person name="Ribeiro J.M.C."/>
            <person name="Wides R."/>
            <person name="Salzberg S.L."/>
            <person name="Loftus B.J."/>
            <person name="Yandell M.D."/>
            <person name="Majoros W.H."/>
            <person name="Rusch D.B."/>
            <person name="Lai Z."/>
            <person name="Kraft C.L."/>
            <person name="Abril J.F."/>
            <person name="Anthouard V."/>
            <person name="Arensburger P."/>
            <person name="Atkinson P.W."/>
            <person name="Baden H."/>
            <person name="de Berardinis V."/>
            <person name="Baldwin D."/>
            <person name="Benes V."/>
            <person name="Biedler J."/>
            <person name="Blass C."/>
            <person name="Bolanos R."/>
            <person name="Boscus D."/>
            <person name="Barnstead M."/>
            <person name="Cai S."/>
            <person name="Center A."/>
            <person name="Chaturverdi K."/>
            <person name="Christophides G.K."/>
            <person name="Chrystal M.A.M."/>
            <person name="Clamp M."/>
            <person name="Cravchik A."/>
            <person name="Curwen V."/>
            <person name="Dana A."/>
            <person name="Delcher A."/>
            <person name="Dew I."/>
            <person name="Evans C.A."/>
            <person name="Flanigan M."/>
            <person name="Grundschober-Freimoser A."/>
            <person name="Friedli L."/>
            <person name="Gu Z."/>
            <person name="Guan P."/>
            <person name="Guigo R."/>
            <person name="Hillenmeyer M.E."/>
            <person name="Hladun S.L."/>
            <person name="Hogan J.R."/>
            <person name="Hong Y.S."/>
            <person name="Hoover J."/>
            <person name="Jaillon O."/>
            <person name="Ke Z."/>
            <person name="Kodira C.D."/>
            <person name="Kokoza E."/>
            <person name="Koutsos A."/>
            <person name="Letunic I."/>
            <person name="Levitsky A.A."/>
            <person name="Liang Y."/>
            <person name="Lin J.-J."/>
            <person name="Lobo N.F."/>
            <person name="Lopez J.R."/>
            <person name="Malek J.A."/>
            <person name="McIntosh T.C."/>
            <person name="Meister S."/>
            <person name="Miller J.R."/>
            <person name="Mobarry C."/>
            <person name="Mongin E."/>
            <person name="Murphy S.D."/>
            <person name="O'Brochta D.A."/>
            <person name="Pfannkoch C."/>
            <person name="Qi R."/>
            <person name="Regier M.A."/>
            <person name="Remington K."/>
            <person name="Shao H."/>
            <person name="Sharakhova M.V."/>
            <person name="Sitter C.D."/>
            <person name="Shetty J."/>
            <person name="Smith T.J."/>
            <person name="Strong R."/>
            <person name="Sun J."/>
            <person name="Thomasova D."/>
            <person name="Ton L.Q."/>
            <person name="Topalis P."/>
            <person name="Tu Z.J."/>
            <person name="Unger M.F."/>
            <person name="Walenz B."/>
            <person name="Wang A.H."/>
            <person name="Wang J."/>
            <person name="Wang M."/>
            <person name="Wang X."/>
            <person name="Woodford K.J."/>
            <person name="Wortman J.R."/>
            <person name="Wu M."/>
            <person name="Yao A."/>
            <person name="Zdobnov E.M."/>
            <person name="Zhang H."/>
            <person name="Zhao Q."/>
            <person name="Zhao S."/>
            <person name="Zhu S.C."/>
            <person name="Zhimulev I."/>
            <person name="Coluzzi M."/>
            <person name="della Torre A."/>
            <person name="Roth C.W."/>
            <person name="Louis C."/>
            <person name="Kalush F."/>
            <person name="Mural R.J."/>
            <person name="Myers E.W."/>
            <person name="Adams M.D."/>
            <person name="Smith H.O."/>
            <person name="Broder S."/>
            <person name="Gardner M.J."/>
            <person name="Fraser C.M."/>
            <person name="Birney E."/>
            <person name="Bork P."/>
            <person name="Brey P.T."/>
            <person name="Venter J.C."/>
            <person name="Weissenbach J."/>
            <person name="Kafatos F.C."/>
            <person name="Collins F.H."/>
            <person name="Hoffman S.L."/>
        </authorList>
    </citation>
    <scope>NUCLEOTIDE SEQUENCE [LARGE SCALE GENOMIC DNA]</scope>
    <source>
        <strain>PEST</strain>
    </source>
</reference>